<protein>
    <recommendedName>
        <fullName evidence="1">UPF0250 protein YbeD</fullName>
    </recommendedName>
</protein>
<dbReference type="EMBL" id="CP001120">
    <property type="protein sequence ID" value="ACF67758.1"/>
    <property type="molecule type" value="Genomic_DNA"/>
</dbReference>
<dbReference type="RefSeq" id="WP_000850547.1">
    <property type="nucleotide sequence ID" value="NC_011083.1"/>
</dbReference>
<dbReference type="SMR" id="B4TAI9"/>
<dbReference type="GeneID" id="83645644"/>
<dbReference type="KEGG" id="seh:SeHA_C0752"/>
<dbReference type="HOGENOM" id="CLU_161438_2_1_6"/>
<dbReference type="Proteomes" id="UP000001866">
    <property type="component" value="Chromosome"/>
</dbReference>
<dbReference type="GO" id="GO:0005829">
    <property type="term" value="C:cytosol"/>
    <property type="evidence" value="ECO:0007669"/>
    <property type="project" value="TreeGrafter"/>
</dbReference>
<dbReference type="FunFam" id="3.30.70.260:FF:000002">
    <property type="entry name" value="UPF0250 protein YbeD"/>
    <property type="match status" value="1"/>
</dbReference>
<dbReference type="Gene3D" id="3.30.70.260">
    <property type="match status" value="1"/>
</dbReference>
<dbReference type="HAMAP" id="MF_00659">
    <property type="entry name" value="UPF0250"/>
    <property type="match status" value="1"/>
</dbReference>
<dbReference type="InterPro" id="IPR007454">
    <property type="entry name" value="UPF0250_YbeD-like"/>
</dbReference>
<dbReference type="InterPro" id="IPR027471">
    <property type="entry name" value="YbeD-like_sf"/>
</dbReference>
<dbReference type="NCBIfam" id="NF003447">
    <property type="entry name" value="PRK04998.1"/>
    <property type="match status" value="1"/>
</dbReference>
<dbReference type="PANTHER" id="PTHR38036">
    <property type="entry name" value="UPF0250 PROTEIN YBED"/>
    <property type="match status" value="1"/>
</dbReference>
<dbReference type="PANTHER" id="PTHR38036:SF1">
    <property type="entry name" value="UPF0250 PROTEIN YBED"/>
    <property type="match status" value="1"/>
</dbReference>
<dbReference type="Pfam" id="PF04359">
    <property type="entry name" value="DUF493"/>
    <property type="match status" value="1"/>
</dbReference>
<dbReference type="SUPFAM" id="SSF117991">
    <property type="entry name" value="YbeD/HP0495-like"/>
    <property type="match status" value="1"/>
</dbReference>
<sequence>MKTKLNELLEFPTPFTYKVMGQALPELVDQVVEVVQRHAPGDYSPTVKPSSKGNYHSVSITINATHIEQVETLYEELGNIDIVRMVL</sequence>
<gene>
    <name evidence="1" type="primary">ybeD</name>
    <name type="ordered locus">SeHA_C0752</name>
</gene>
<reference key="1">
    <citation type="journal article" date="2011" name="J. Bacteriol.">
        <title>Comparative genomics of 28 Salmonella enterica isolates: evidence for CRISPR-mediated adaptive sublineage evolution.</title>
        <authorList>
            <person name="Fricke W.F."/>
            <person name="Mammel M.K."/>
            <person name="McDermott P.F."/>
            <person name="Tartera C."/>
            <person name="White D.G."/>
            <person name="Leclerc J.E."/>
            <person name="Ravel J."/>
            <person name="Cebula T.A."/>
        </authorList>
    </citation>
    <scope>NUCLEOTIDE SEQUENCE [LARGE SCALE GENOMIC DNA]</scope>
    <source>
        <strain>SL476</strain>
    </source>
</reference>
<organism>
    <name type="scientific">Salmonella heidelberg (strain SL476)</name>
    <dbReference type="NCBI Taxonomy" id="454169"/>
    <lineage>
        <taxon>Bacteria</taxon>
        <taxon>Pseudomonadati</taxon>
        <taxon>Pseudomonadota</taxon>
        <taxon>Gammaproteobacteria</taxon>
        <taxon>Enterobacterales</taxon>
        <taxon>Enterobacteriaceae</taxon>
        <taxon>Salmonella</taxon>
    </lineage>
</organism>
<evidence type="ECO:0000255" key="1">
    <source>
        <dbReference type="HAMAP-Rule" id="MF_00659"/>
    </source>
</evidence>
<proteinExistence type="inferred from homology"/>
<comment type="similarity">
    <text evidence="1">Belongs to the UPF0250 family.</text>
</comment>
<name>YBED_SALHS</name>
<feature type="chain" id="PRO_1000131257" description="UPF0250 protein YbeD">
    <location>
        <begin position="1"/>
        <end position="87"/>
    </location>
</feature>
<accession>B4TAI9</accession>